<gene>
    <name type="ORF">GI17406</name>
</gene>
<organism>
    <name type="scientific">Drosophila mojavensis</name>
    <name type="common">Fruit fly</name>
    <dbReference type="NCBI Taxonomy" id="7230"/>
    <lineage>
        <taxon>Eukaryota</taxon>
        <taxon>Metazoa</taxon>
        <taxon>Ecdysozoa</taxon>
        <taxon>Arthropoda</taxon>
        <taxon>Hexapoda</taxon>
        <taxon>Insecta</taxon>
        <taxon>Pterygota</taxon>
        <taxon>Neoptera</taxon>
        <taxon>Endopterygota</taxon>
        <taxon>Diptera</taxon>
        <taxon>Brachycera</taxon>
        <taxon>Muscomorpha</taxon>
        <taxon>Ephydroidea</taxon>
        <taxon>Drosophilidae</taxon>
        <taxon>Drosophila</taxon>
    </lineage>
</organism>
<proteinExistence type="inferred from homology"/>
<keyword id="KW-0067">ATP-binding</keyword>
<keyword id="KW-0436">Ligase</keyword>
<keyword id="KW-0496">Mitochondrion</keyword>
<keyword id="KW-0547">Nucleotide-binding</keyword>
<keyword id="KW-0648">Protein biosynthesis</keyword>
<keyword id="KW-1185">Reference proteome</keyword>
<name>GATC_DROMO</name>
<accession>B4KEN8</accession>
<sequence length="125" mass="13941">MVAALLSHPTKVPQTPVPAAFPDTSKNPIEIDTNTIKLLERLSLVDLDSDQALDTLKSSIQFADKIANINTDNVQPLYTVLEHQQLQLRNDQVTAGNCREELLRCAKRTDEDYYVSPPGNIPLEQ</sequence>
<comment type="function">
    <text evidence="1">Allows the formation of correctly charged Gln-tRNA(Gln) through the transamidation of misacylated Glu-tRNA(Gln) in the mitochondria. The reaction takes place in the presence of glutamine and ATP through an activated gamma-phospho-Glu-tRNA(Gln).</text>
</comment>
<comment type="catalytic activity">
    <reaction evidence="1">
        <text>L-glutamyl-tRNA(Gln) + L-glutamine + ATP + H2O = L-glutaminyl-tRNA(Gln) + L-glutamate + ADP + phosphate + H(+)</text>
        <dbReference type="Rhea" id="RHEA:17521"/>
        <dbReference type="Rhea" id="RHEA-COMP:9681"/>
        <dbReference type="Rhea" id="RHEA-COMP:9684"/>
        <dbReference type="ChEBI" id="CHEBI:15377"/>
        <dbReference type="ChEBI" id="CHEBI:15378"/>
        <dbReference type="ChEBI" id="CHEBI:29985"/>
        <dbReference type="ChEBI" id="CHEBI:30616"/>
        <dbReference type="ChEBI" id="CHEBI:43474"/>
        <dbReference type="ChEBI" id="CHEBI:58359"/>
        <dbReference type="ChEBI" id="CHEBI:78520"/>
        <dbReference type="ChEBI" id="CHEBI:78521"/>
        <dbReference type="ChEBI" id="CHEBI:456216"/>
    </reaction>
</comment>
<comment type="subunit">
    <text evidence="1">Subunit of the heterotrimeric GatCAB amidotransferase (AdT) complex, composed of A, B and C subunits.</text>
</comment>
<comment type="subcellular location">
    <subcellularLocation>
        <location evidence="1">Mitochondrion</location>
    </subcellularLocation>
</comment>
<comment type="miscellaneous">
    <text evidence="1">This protein may be expected to contain an N-terminal transit peptide but none has been predicted.</text>
</comment>
<comment type="similarity">
    <text evidence="1">Belongs to the GatC family.</text>
</comment>
<reference key="1">
    <citation type="journal article" date="2007" name="Nature">
        <title>Evolution of genes and genomes on the Drosophila phylogeny.</title>
        <authorList>
            <consortium name="Drosophila 12 genomes consortium"/>
        </authorList>
    </citation>
    <scope>NUCLEOTIDE SEQUENCE [LARGE SCALE GENOMIC DNA]</scope>
    <source>
        <strain>Tucson 15081-1352.22</strain>
    </source>
</reference>
<dbReference type="EC" id="6.3.5.-" evidence="1"/>
<dbReference type="EMBL" id="CH933807">
    <property type="protein sequence ID" value="EDW11917.1"/>
    <property type="molecule type" value="Genomic_DNA"/>
</dbReference>
<dbReference type="SMR" id="B4KEN8"/>
<dbReference type="FunCoup" id="B4KEN8">
    <property type="interactions" value="1113"/>
</dbReference>
<dbReference type="EnsemblMetazoa" id="FBtr0424039">
    <property type="protein sequence ID" value="FBpp0381926"/>
    <property type="gene ID" value="FBgn0140150"/>
</dbReference>
<dbReference type="EnsemblMetazoa" id="XM_002002439.4">
    <property type="protein sequence ID" value="XP_002002475.2"/>
    <property type="gene ID" value="LOC6576486"/>
</dbReference>
<dbReference type="GeneID" id="6576486"/>
<dbReference type="KEGG" id="dmo:Dmoj_GI17406"/>
<dbReference type="CTD" id="283459"/>
<dbReference type="eggNOG" id="KOG4247">
    <property type="taxonomic scope" value="Eukaryota"/>
</dbReference>
<dbReference type="HOGENOM" id="CLU_105899_0_1_1"/>
<dbReference type="InParanoid" id="B4KEN8"/>
<dbReference type="OMA" id="RCAKRTD"/>
<dbReference type="OrthoDB" id="5394539at2759"/>
<dbReference type="PhylomeDB" id="B4KEN8"/>
<dbReference type="Proteomes" id="UP000009192">
    <property type="component" value="Unassembled WGS sequence"/>
</dbReference>
<dbReference type="GO" id="GO:0030956">
    <property type="term" value="C:glutamyl-tRNA(Gln) amidotransferase complex"/>
    <property type="evidence" value="ECO:0007669"/>
    <property type="project" value="UniProtKB-UniRule"/>
</dbReference>
<dbReference type="GO" id="GO:0005739">
    <property type="term" value="C:mitochondrion"/>
    <property type="evidence" value="ECO:0007669"/>
    <property type="project" value="UniProtKB-SubCell"/>
</dbReference>
<dbReference type="GO" id="GO:0005524">
    <property type="term" value="F:ATP binding"/>
    <property type="evidence" value="ECO:0007669"/>
    <property type="project" value="UniProtKB-KW"/>
</dbReference>
<dbReference type="GO" id="GO:0050567">
    <property type="term" value="F:glutaminyl-tRNA synthase (glutamine-hydrolyzing) activity"/>
    <property type="evidence" value="ECO:0007669"/>
    <property type="project" value="UniProtKB-UniRule"/>
</dbReference>
<dbReference type="GO" id="GO:0070681">
    <property type="term" value="P:glutaminyl-tRNAGln biosynthesis via transamidation"/>
    <property type="evidence" value="ECO:0007669"/>
    <property type="project" value="UniProtKB-UniRule"/>
</dbReference>
<dbReference type="GO" id="GO:0032543">
    <property type="term" value="P:mitochondrial translation"/>
    <property type="evidence" value="ECO:0007669"/>
    <property type="project" value="UniProtKB-UniRule"/>
</dbReference>
<dbReference type="GO" id="GO:0006450">
    <property type="term" value="P:regulation of translational fidelity"/>
    <property type="evidence" value="ECO:0007669"/>
    <property type="project" value="InterPro"/>
</dbReference>
<dbReference type="HAMAP" id="MF_00122">
    <property type="entry name" value="GatC"/>
    <property type="match status" value="1"/>
</dbReference>
<dbReference type="InterPro" id="IPR036113">
    <property type="entry name" value="Asp/Glu-ADT_sf_sub_c"/>
</dbReference>
<dbReference type="InterPro" id="IPR003837">
    <property type="entry name" value="GatC"/>
</dbReference>
<dbReference type="NCBIfam" id="TIGR00135">
    <property type="entry name" value="gatC"/>
    <property type="match status" value="1"/>
</dbReference>
<dbReference type="PANTHER" id="PTHR15004">
    <property type="entry name" value="GLUTAMYL-TRNA(GLN) AMIDOTRANSFERASE SUBUNIT C, MITOCHONDRIAL"/>
    <property type="match status" value="1"/>
</dbReference>
<dbReference type="PANTHER" id="PTHR15004:SF0">
    <property type="entry name" value="GLUTAMYL-TRNA(GLN) AMIDOTRANSFERASE SUBUNIT C, MITOCHONDRIAL"/>
    <property type="match status" value="1"/>
</dbReference>
<dbReference type="Pfam" id="PF02686">
    <property type="entry name" value="GatC"/>
    <property type="match status" value="1"/>
</dbReference>
<dbReference type="SUPFAM" id="SSF141000">
    <property type="entry name" value="Glu-tRNAGln amidotransferase C subunit"/>
    <property type="match status" value="1"/>
</dbReference>
<evidence type="ECO:0000255" key="1">
    <source>
        <dbReference type="HAMAP-Rule" id="MF_03149"/>
    </source>
</evidence>
<feature type="chain" id="PRO_0000413304" description="Glutamyl-tRNA(Gln) amidotransferase subunit C, mitochondrial">
    <location>
        <begin position="1"/>
        <end position="125"/>
    </location>
</feature>
<protein>
    <recommendedName>
        <fullName evidence="1">Glutamyl-tRNA(Gln) amidotransferase subunit C, mitochondrial</fullName>
        <shortName evidence="1">Glu-AdT subunit C</shortName>
        <ecNumber evidence="1">6.3.5.-</ecNumber>
    </recommendedName>
</protein>